<protein>
    <recommendedName>
        <fullName>NADH-ubiquinone oxidoreductase chain 1</fullName>
        <ecNumber evidence="1">7.1.1.2</ecNumber>
    </recommendedName>
    <alternativeName>
        <fullName>NADH dehydrogenase subunit 1</fullName>
    </alternativeName>
</protein>
<evidence type="ECO:0000250" key="1">
    <source>
        <dbReference type="UniProtKB" id="P03886"/>
    </source>
</evidence>
<evidence type="ECO:0000250" key="2">
    <source>
        <dbReference type="UniProtKB" id="P03887"/>
    </source>
</evidence>
<evidence type="ECO:0000255" key="3"/>
<evidence type="ECO:0000305" key="4"/>
<evidence type="ECO:0000312" key="5">
    <source>
        <dbReference type="Proteomes" id="UP000002281"/>
    </source>
</evidence>
<geneLocation type="mitochondrion"/>
<organism>
    <name type="scientific">Equus caballus</name>
    <name type="common">Horse</name>
    <dbReference type="NCBI Taxonomy" id="9796"/>
    <lineage>
        <taxon>Eukaryota</taxon>
        <taxon>Metazoa</taxon>
        <taxon>Chordata</taxon>
        <taxon>Craniata</taxon>
        <taxon>Vertebrata</taxon>
        <taxon>Euteleostomi</taxon>
        <taxon>Mammalia</taxon>
        <taxon>Eutheria</taxon>
        <taxon>Laurasiatheria</taxon>
        <taxon>Perissodactyla</taxon>
        <taxon>Equidae</taxon>
        <taxon>Equus</taxon>
    </lineage>
</organism>
<accession>P48652</accession>
<reference key="1">
    <citation type="journal article" date="1994" name="Gene">
        <title>The complete mitochondrial DNA sequence of the horse, Equus caballus: extensive heteroplasmy of the control region.</title>
        <authorList>
            <person name="Xu X."/>
            <person name="Arnason U."/>
        </authorList>
    </citation>
    <scope>NUCLEOTIDE SEQUENCE [LARGE SCALE GENOMIC DNA]</scope>
    <source>
        <strain evidence="5">Thoroughbred</strain>
    </source>
</reference>
<gene>
    <name type="primary">MT-ND1</name>
    <name type="synonym">MTND1</name>
    <name type="synonym">NADH1</name>
    <name type="synonym">ND1</name>
</gene>
<name>NU1M_HORSE</name>
<keyword id="KW-0249">Electron transport</keyword>
<keyword id="KW-0472">Membrane</keyword>
<keyword id="KW-0496">Mitochondrion</keyword>
<keyword id="KW-0999">Mitochondrion inner membrane</keyword>
<keyword id="KW-0520">NAD</keyword>
<keyword id="KW-1185">Reference proteome</keyword>
<keyword id="KW-0679">Respiratory chain</keyword>
<keyword id="KW-1278">Translocase</keyword>
<keyword id="KW-0812">Transmembrane</keyword>
<keyword id="KW-1133">Transmembrane helix</keyword>
<keyword id="KW-0813">Transport</keyword>
<keyword id="KW-0830">Ubiquinone</keyword>
<feature type="chain" id="PRO_0000117413" description="NADH-ubiquinone oxidoreductase chain 1">
    <location>
        <begin position="1"/>
        <end position="318"/>
    </location>
</feature>
<feature type="transmembrane region" description="Helical" evidence="3">
    <location>
        <begin position="2"/>
        <end position="22"/>
    </location>
</feature>
<feature type="transmembrane region" description="Helical" evidence="3">
    <location>
        <begin position="70"/>
        <end position="90"/>
    </location>
</feature>
<feature type="transmembrane region" description="Helical" evidence="3">
    <location>
        <begin position="100"/>
        <end position="120"/>
    </location>
</feature>
<feature type="transmembrane region" description="Helical" evidence="3">
    <location>
        <begin position="147"/>
        <end position="167"/>
    </location>
</feature>
<feature type="transmembrane region" description="Helical" evidence="3">
    <location>
        <begin position="171"/>
        <end position="191"/>
    </location>
</feature>
<feature type="transmembrane region" description="Helical" evidence="3">
    <location>
        <begin position="217"/>
        <end position="237"/>
    </location>
</feature>
<feature type="transmembrane region" description="Helical" evidence="3">
    <location>
        <begin position="253"/>
        <end position="273"/>
    </location>
</feature>
<feature type="transmembrane region" description="Helical" evidence="3">
    <location>
        <begin position="294"/>
        <end position="314"/>
    </location>
</feature>
<comment type="function">
    <text evidence="1">Core subunit of the mitochondrial membrane respiratory chain NADH dehydrogenase (Complex I) which catalyzes electron transfer from NADH through the respiratory chain, using ubiquinone as an electron acceptor. Essential for the catalytic activity and assembly of complex I.</text>
</comment>
<comment type="catalytic activity">
    <reaction evidence="1">
        <text>a ubiquinone + NADH + 5 H(+)(in) = a ubiquinol + NAD(+) + 4 H(+)(out)</text>
        <dbReference type="Rhea" id="RHEA:29091"/>
        <dbReference type="Rhea" id="RHEA-COMP:9565"/>
        <dbReference type="Rhea" id="RHEA-COMP:9566"/>
        <dbReference type="ChEBI" id="CHEBI:15378"/>
        <dbReference type="ChEBI" id="CHEBI:16389"/>
        <dbReference type="ChEBI" id="CHEBI:17976"/>
        <dbReference type="ChEBI" id="CHEBI:57540"/>
        <dbReference type="ChEBI" id="CHEBI:57945"/>
        <dbReference type="EC" id="7.1.1.2"/>
    </reaction>
</comment>
<comment type="subunit">
    <text evidence="2">Core subunit of respiratory chain NADH dehydrogenase (Complex I) which is composed of 45 different subunits.</text>
</comment>
<comment type="subcellular location">
    <subcellularLocation>
        <location evidence="2">Mitochondrion inner membrane</location>
        <topology evidence="3">Multi-pass membrane protein</topology>
    </subcellularLocation>
</comment>
<comment type="similarity">
    <text evidence="4">Belongs to the complex I subunit 1 family.</text>
</comment>
<sequence>MFMINVLLLIVPILLAVAFLTLVERKVLGYMQLRKGPNIVGPYGLLQPIADALKLFIKEPLQPLTSSTSMFIIAPILALTLALTMWIPLPMPYPLINMNLGILFMLAMSSLAVYSILWSGWASNSKYALIGALRAVAQTISYEVTLAIILLSVLLMSGSFTLSTLIITQEYLWLIFPSWPLAMMWFISTLAETNRAPFDLTEGESELVSGFNVEYAAGPFALFFLAEYANIIMMNIFTTTLFLGAFHNPYLPELYSINFTIKALLLTCSFLWIRASYPRFRYDQLMHLLWKNFLPLTLALCMWHVSLPIMLSSIPPQT</sequence>
<proteinExistence type="inferred from homology"/>
<dbReference type="EC" id="7.1.1.2" evidence="1"/>
<dbReference type="EMBL" id="X79547">
    <property type="protein sequence ID" value="CAA56079.1"/>
    <property type="molecule type" value="Genomic_DNA"/>
</dbReference>
<dbReference type="PIR" id="T11857">
    <property type="entry name" value="T11857"/>
</dbReference>
<dbReference type="RefSeq" id="NP_007160.1">
    <property type="nucleotide sequence ID" value="NC_001640.1"/>
</dbReference>
<dbReference type="SMR" id="P48652"/>
<dbReference type="FunCoup" id="P48652">
    <property type="interactions" value="133"/>
</dbReference>
<dbReference type="STRING" id="9796.ENSECAP00000023111"/>
<dbReference type="PaxDb" id="9796-ENSECAP00000023111"/>
<dbReference type="Ensembl" id="ENSECAT00000029856.1">
    <property type="protein sequence ID" value="ENSECAP00000023111.1"/>
    <property type="gene ID" value="ENSECAG00000027684.1"/>
</dbReference>
<dbReference type="KEGG" id="ecb:807846"/>
<dbReference type="VGNC" id="VGNC:99800">
    <property type="gene designation" value="MT-ND1"/>
</dbReference>
<dbReference type="GeneTree" id="ENSGT00390000006621"/>
<dbReference type="HOGENOM" id="CLU_015134_0_1_1"/>
<dbReference type="InParanoid" id="P48652"/>
<dbReference type="OMA" id="WSGWASN"/>
<dbReference type="OrthoDB" id="531329at2759"/>
<dbReference type="Proteomes" id="UP000002281">
    <property type="component" value="Mitochondrion"/>
</dbReference>
<dbReference type="Bgee" id="ENSECAG00000027684">
    <property type="expression patterns" value="Expressed in prefrontal cortex and 23 other cell types or tissues"/>
</dbReference>
<dbReference type="GO" id="GO:0005743">
    <property type="term" value="C:mitochondrial inner membrane"/>
    <property type="evidence" value="ECO:0000250"/>
    <property type="project" value="UniProtKB"/>
</dbReference>
<dbReference type="GO" id="GO:0045271">
    <property type="term" value="C:respiratory chain complex I"/>
    <property type="evidence" value="ECO:0000318"/>
    <property type="project" value="GO_Central"/>
</dbReference>
<dbReference type="GO" id="GO:0008137">
    <property type="term" value="F:NADH dehydrogenase (ubiquinone) activity"/>
    <property type="evidence" value="ECO:0000250"/>
    <property type="project" value="UniProtKB"/>
</dbReference>
<dbReference type="GO" id="GO:0009060">
    <property type="term" value="P:aerobic respiration"/>
    <property type="evidence" value="ECO:0000318"/>
    <property type="project" value="GO_Central"/>
</dbReference>
<dbReference type="GO" id="GO:0006120">
    <property type="term" value="P:mitochondrial electron transport, NADH to ubiquinone"/>
    <property type="evidence" value="ECO:0000250"/>
    <property type="project" value="UniProtKB"/>
</dbReference>
<dbReference type="GO" id="GO:0032981">
    <property type="term" value="P:mitochondrial respiratory chain complex I assembly"/>
    <property type="evidence" value="ECO:0000250"/>
    <property type="project" value="UniProtKB"/>
</dbReference>
<dbReference type="HAMAP" id="MF_01350">
    <property type="entry name" value="NDH1_NuoH"/>
    <property type="match status" value="1"/>
</dbReference>
<dbReference type="InterPro" id="IPR001694">
    <property type="entry name" value="NADH_UbQ_OxRdtase_su1/FPO"/>
</dbReference>
<dbReference type="InterPro" id="IPR018086">
    <property type="entry name" value="NADH_UbQ_OxRdtase_su1_CS"/>
</dbReference>
<dbReference type="PANTHER" id="PTHR11432">
    <property type="entry name" value="NADH DEHYDROGENASE SUBUNIT 1"/>
    <property type="match status" value="1"/>
</dbReference>
<dbReference type="PANTHER" id="PTHR11432:SF3">
    <property type="entry name" value="NADH-UBIQUINONE OXIDOREDUCTASE CHAIN 1"/>
    <property type="match status" value="1"/>
</dbReference>
<dbReference type="Pfam" id="PF00146">
    <property type="entry name" value="NADHdh"/>
    <property type="match status" value="1"/>
</dbReference>
<dbReference type="PROSITE" id="PS00667">
    <property type="entry name" value="COMPLEX1_ND1_1"/>
    <property type="match status" value="1"/>
</dbReference>
<dbReference type="PROSITE" id="PS00668">
    <property type="entry name" value="COMPLEX1_ND1_2"/>
    <property type="match status" value="1"/>
</dbReference>